<organism>
    <name type="scientific">Burkholderia mallei (strain NCTC 10247)</name>
    <dbReference type="NCBI Taxonomy" id="320389"/>
    <lineage>
        <taxon>Bacteria</taxon>
        <taxon>Pseudomonadati</taxon>
        <taxon>Pseudomonadota</taxon>
        <taxon>Betaproteobacteria</taxon>
        <taxon>Burkholderiales</taxon>
        <taxon>Burkholderiaceae</taxon>
        <taxon>Burkholderia</taxon>
        <taxon>pseudomallei group</taxon>
    </lineage>
</organism>
<evidence type="ECO:0000255" key="1">
    <source>
        <dbReference type="HAMAP-Rule" id="MF_00146"/>
    </source>
</evidence>
<accession>A3MLM0</accession>
<comment type="function">
    <text evidence="1">Catalyzes the deamination of dCTP to dUTP.</text>
</comment>
<comment type="catalytic activity">
    <reaction evidence="1">
        <text>dCTP + H2O + H(+) = dUTP + NH4(+)</text>
        <dbReference type="Rhea" id="RHEA:22680"/>
        <dbReference type="ChEBI" id="CHEBI:15377"/>
        <dbReference type="ChEBI" id="CHEBI:15378"/>
        <dbReference type="ChEBI" id="CHEBI:28938"/>
        <dbReference type="ChEBI" id="CHEBI:61481"/>
        <dbReference type="ChEBI" id="CHEBI:61555"/>
        <dbReference type="EC" id="3.5.4.13"/>
    </reaction>
</comment>
<comment type="pathway">
    <text evidence="1">Pyrimidine metabolism; dUMP biosynthesis; dUMP from dCTP (dUTP route): step 1/2.</text>
</comment>
<comment type="subunit">
    <text evidence="1">Homotrimer.</text>
</comment>
<comment type="similarity">
    <text evidence="1">Belongs to the dCTP deaminase family.</text>
</comment>
<dbReference type="EC" id="3.5.4.13" evidence="1"/>
<dbReference type="EMBL" id="CP000548">
    <property type="protein sequence ID" value="ABO06135.1"/>
    <property type="molecule type" value="Genomic_DNA"/>
</dbReference>
<dbReference type="RefSeq" id="WP_004192666.1">
    <property type="nucleotide sequence ID" value="NZ_CP007802.1"/>
</dbReference>
<dbReference type="SMR" id="A3MLM0"/>
<dbReference type="GeneID" id="93059502"/>
<dbReference type="KEGG" id="bmaz:BM44_1561"/>
<dbReference type="KEGG" id="bmn:BMA10247_1612"/>
<dbReference type="PATRIC" id="fig|320389.8.peg.1744"/>
<dbReference type="UniPathway" id="UPA00610">
    <property type="reaction ID" value="UER00665"/>
</dbReference>
<dbReference type="GO" id="GO:0008829">
    <property type="term" value="F:dCTP deaminase activity"/>
    <property type="evidence" value="ECO:0007669"/>
    <property type="project" value="UniProtKB-UniRule"/>
</dbReference>
<dbReference type="GO" id="GO:0000166">
    <property type="term" value="F:nucleotide binding"/>
    <property type="evidence" value="ECO:0007669"/>
    <property type="project" value="UniProtKB-KW"/>
</dbReference>
<dbReference type="GO" id="GO:0006226">
    <property type="term" value="P:dUMP biosynthetic process"/>
    <property type="evidence" value="ECO:0007669"/>
    <property type="project" value="UniProtKB-UniPathway"/>
</dbReference>
<dbReference type="GO" id="GO:0006229">
    <property type="term" value="P:dUTP biosynthetic process"/>
    <property type="evidence" value="ECO:0007669"/>
    <property type="project" value="UniProtKB-UniRule"/>
</dbReference>
<dbReference type="GO" id="GO:0015949">
    <property type="term" value="P:nucleobase-containing small molecule interconversion"/>
    <property type="evidence" value="ECO:0007669"/>
    <property type="project" value="TreeGrafter"/>
</dbReference>
<dbReference type="CDD" id="cd07557">
    <property type="entry name" value="trimeric_dUTPase"/>
    <property type="match status" value="1"/>
</dbReference>
<dbReference type="FunFam" id="2.70.40.10:FF:000001">
    <property type="entry name" value="dCTP deaminase"/>
    <property type="match status" value="1"/>
</dbReference>
<dbReference type="Gene3D" id="2.70.40.10">
    <property type="match status" value="1"/>
</dbReference>
<dbReference type="HAMAP" id="MF_00146">
    <property type="entry name" value="dCTP_deaminase"/>
    <property type="match status" value="1"/>
</dbReference>
<dbReference type="InterPro" id="IPR011962">
    <property type="entry name" value="dCTP_deaminase"/>
</dbReference>
<dbReference type="InterPro" id="IPR036157">
    <property type="entry name" value="dUTPase-like_sf"/>
</dbReference>
<dbReference type="InterPro" id="IPR033704">
    <property type="entry name" value="dUTPase_trimeric"/>
</dbReference>
<dbReference type="NCBIfam" id="TIGR02274">
    <property type="entry name" value="dCTP_deam"/>
    <property type="match status" value="1"/>
</dbReference>
<dbReference type="PANTHER" id="PTHR42680">
    <property type="entry name" value="DCTP DEAMINASE"/>
    <property type="match status" value="1"/>
</dbReference>
<dbReference type="PANTHER" id="PTHR42680:SF3">
    <property type="entry name" value="DCTP DEAMINASE"/>
    <property type="match status" value="1"/>
</dbReference>
<dbReference type="Pfam" id="PF22769">
    <property type="entry name" value="DCD"/>
    <property type="match status" value="1"/>
</dbReference>
<dbReference type="SUPFAM" id="SSF51283">
    <property type="entry name" value="dUTPase-like"/>
    <property type="match status" value="1"/>
</dbReference>
<name>DCD_BURM7</name>
<proteinExistence type="inferred from homology"/>
<sequence>MSIKSDKWIRRMAEEHKMIEPFVPDQVRAAEDGRKIVSYGTSSYGYDIRCADEFKIFTNINSTIVDPKNFDEGSFVDFKGDVCIIPPNSFALARTVEYFRIPRTVLTVCLGKSTYARCGIIVNVTPFEPEWEGYVTLEFSNTTPLPAKIYANEGVAQVLFFESDEVCDVSYADRGGKYQGQRGVTLPKT</sequence>
<keyword id="KW-0378">Hydrolase</keyword>
<keyword id="KW-0546">Nucleotide metabolism</keyword>
<keyword id="KW-0547">Nucleotide-binding</keyword>
<gene>
    <name evidence="1" type="primary">dcd</name>
    <name type="ordered locus">BMA10247_1612</name>
</gene>
<feature type="chain" id="PRO_1000009687" description="dCTP deaminase">
    <location>
        <begin position="1"/>
        <end position="189"/>
    </location>
</feature>
<feature type="active site" description="Proton donor/acceptor" evidence="1">
    <location>
        <position position="138"/>
    </location>
</feature>
<feature type="binding site" evidence="1">
    <location>
        <begin position="112"/>
        <end position="117"/>
    </location>
    <ligand>
        <name>dCTP</name>
        <dbReference type="ChEBI" id="CHEBI:61481"/>
    </ligand>
</feature>
<feature type="binding site" evidence="1">
    <location>
        <begin position="136"/>
        <end position="138"/>
    </location>
    <ligand>
        <name>dCTP</name>
        <dbReference type="ChEBI" id="CHEBI:61481"/>
    </ligand>
</feature>
<feature type="binding site" evidence="1">
    <location>
        <position position="157"/>
    </location>
    <ligand>
        <name>dCTP</name>
        <dbReference type="ChEBI" id="CHEBI:61481"/>
    </ligand>
</feature>
<feature type="binding site" evidence="1">
    <location>
        <position position="171"/>
    </location>
    <ligand>
        <name>dCTP</name>
        <dbReference type="ChEBI" id="CHEBI:61481"/>
    </ligand>
</feature>
<feature type="binding site" evidence="1">
    <location>
        <position position="181"/>
    </location>
    <ligand>
        <name>dCTP</name>
        <dbReference type="ChEBI" id="CHEBI:61481"/>
    </ligand>
</feature>
<reference key="1">
    <citation type="journal article" date="2010" name="Genome Biol. Evol.">
        <title>Continuing evolution of Burkholderia mallei through genome reduction and large-scale rearrangements.</title>
        <authorList>
            <person name="Losada L."/>
            <person name="Ronning C.M."/>
            <person name="DeShazer D."/>
            <person name="Woods D."/>
            <person name="Fedorova N."/>
            <person name="Kim H.S."/>
            <person name="Shabalina S.A."/>
            <person name="Pearson T.R."/>
            <person name="Brinkac L."/>
            <person name="Tan P."/>
            <person name="Nandi T."/>
            <person name="Crabtree J."/>
            <person name="Badger J."/>
            <person name="Beckstrom-Sternberg S."/>
            <person name="Saqib M."/>
            <person name="Schutzer S.E."/>
            <person name="Keim P."/>
            <person name="Nierman W.C."/>
        </authorList>
    </citation>
    <scope>NUCLEOTIDE SEQUENCE [LARGE SCALE GENOMIC DNA]</scope>
    <source>
        <strain>NCTC 10247</strain>
    </source>
</reference>
<protein>
    <recommendedName>
        <fullName evidence="1">dCTP deaminase</fullName>
        <ecNumber evidence="1">3.5.4.13</ecNumber>
    </recommendedName>
    <alternativeName>
        <fullName evidence="1">Deoxycytidine triphosphate deaminase</fullName>
    </alternativeName>
</protein>